<keyword id="KW-0131">Cell cycle</keyword>
<keyword id="KW-0132">Cell division</keyword>
<keyword id="KW-0997">Cell inner membrane</keyword>
<keyword id="KW-1003">Cell membrane</keyword>
<keyword id="KW-0133">Cell shape</keyword>
<keyword id="KW-0961">Cell wall biogenesis/degradation</keyword>
<keyword id="KW-0460">Magnesium</keyword>
<keyword id="KW-0472">Membrane</keyword>
<keyword id="KW-0479">Metal-binding</keyword>
<keyword id="KW-0573">Peptidoglycan synthesis</keyword>
<keyword id="KW-1185">Reference proteome</keyword>
<keyword id="KW-0808">Transferase</keyword>
<keyword id="KW-0812">Transmembrane</keyword>
<keyword id="KW-1133">Transmembrane helix</keyword>
<name>MRAY_SHELP</name>
<gene>
    <name evidence="1" type="primary">mraY</name>
    <name type="ordered locus">Shew_3456</name>
</gene>
<reference key="1">
    <citation type="submission" date="2007-03" db="EMBL/GenBank/DDBJ databases">
        <title>Complete sequence of Shewanella loihica PV-4.</title>
        <authorList>
            <consortium name="US DOE Joint Genome Institute"/>
            <person name="Copeland A."/>
            <person name="Lucas S."/>
            <person name="Lapidus A."/>
            <person name="Barry K."/>
            <person name="Detter J.C."/>
            <person name="Glavina del Rio T."/>
            <person name="Hammon N."/>
            <person name="Israni S."/>
            <person name="Dalin E."/>
            <person name="Tice H."/>
            <person name="Pitluck S."/>
            <person name="Chain P."/>
            <person name="Malfatti S."/>
            <person name="Shin M."/>
            <person name="Vergez L."/>
            <person name="Schmutz J."/>
            <person name="Larimer F."/>
            <person name="Land M."/>
            <person name="Hauser L."/>
            <person name="Kyrpides N."/>
            <person name="Mikhailova N."/>
            <person name="Romine M.F."/>
            <person name="Serres G."/>
            <person name="Fredrickson J."/>
            <person name="Tiedje J."/>
            <person name="Richardson P."/>
        </authorList>
    </citation>
    <scope>NUCLEOTIDE SEQUENCE [LARGE SCALE GENOMIC DNA]</scope>
    <source>
        <strain>ATCC BAA-1088 / PV-4</strain>
    </source>
</reference>
<organism>
    <name type="scientific">Shewanella loihica (strain ATCC BAA-1088 / PV-4)</name>
    <dbReference type="NCBI Taxonomy" id="323850"/>
    <lineage>
        <taxon>Bacteria</taxon>
        <taxon>Pseudomonadati</taxon>
        <taxon>Pseudomonadota</taxon>
        <taxon>Gammaproteobacteria</taxon>
        <taxon>Alteromonadales</taxon>
        <taxon>Shewanellaceae</taxon>
        <taxon>Shewanella</taxon>
    </lineage>
</organism>
<evidence type="ECO:0000255" key="1">
    <source>
        <dbReference type="HAMAP-Rule" id="MF_00038"/>
    </source>
</evidence>
<comment type="function">
    <text evidence="1">Catalyzes the initial step of the lipid cycle reactions in the biosynthesis of the cell wall peptidoglycan: transfers peptidoglycan precursor phospho-MurNAc-pentapeptide from UDP-MurNAc-pentapeptide onto the lipid carrier undecaprenyl phosphate, yielding undecaprenyl-pyrophosphoryl-MurNAc-pentapeptide, known as lipid I.</text>
</comment>
<comment type="catalytic activity">
    <reaction evidence="1">
        <text>UDP-N-acetyl-alpha-D-muramoyl-L-alanyl-gamma-D-glutamyl-meso-2,6-diaminopimeloyl-D-alanyl-D-alanine + di-trans,octa-cis-undecaprenyl phosphate = di-trans,octa-cis-undecaprenyl diphospho-N-acetyl-alpha-D-muramoyl-L-alanyl-D-glutamyl-meso-2,6-diaminopimeloyl-D-alanyl-D-alanine + UMP</text>
        <dbReference type="Rhea" id="RHEA:28386"/>
        <dbReference type="ChEBI" id="CHEBI:57865"/>
        <dbReference type="ChEBI" id="CHEBI:60392"/>
        <dbReference type="ChEBI" id="CHEBI:61386"/>
        <dbReference type="ChEBI" id="CHEBI:61387"/>
        <dbReference type="EC" id="2.7.8.13"/>
    </reaction>
</comment>
<comment type="cofactor">
    <cofactor evidence="1">
        <name>Mg(2+)</name>
        <dbReference type="ChEBI" id="CHEBI:18420"/>
    </cofactor>
</comment>
<comment type="pathway">
    <text evidence="1">Cell wall biogenesis; peptidoglycan biosynthesis.</text>
</comment>
<comment type="subcellular location">
    <subcellularLocation>
        <location evidence="1">Cell inner membrane</location>
        <topology evidence="1">Multi-pass membrane protein</topology>
    </subcellularLocation>
</comment>
<comment type="similarity">
    <text evidence="1">Belongs to the glycosyltransferase 4 family. MraY subfamily.</text>
</comment>
<feature type="chain" id="PRO_1000003059" description="Phospho-N-acetylmuramoyl-pentapeptide-transferase">
    <location>
        <begin position="1"/>
        <end position="360"/>
    </location>
</feature>
<feature type="transmembrane region" description="Helical" evidence="1">
    <location>
        <begin position="21"/>
        <end position="41"/>
    </location>
</feature>
<feature type="transmembrane region" description="Helical" evidence="1">
    <location>
        <begin position="74"/>
        <end position="94"/>
    </location>
</feature>
<feature type="transmembrane region" description="Helical" evidence="1">
    <location>
        <begin position="97"/>
        <end position="117"/>
    </location>
</feature>
<feature type="transmembrane region" description="Helical" evidence="1">
    <location>
        <begin position="134"/>
        <end position="154"/>
    </location>
</feature>
<feature type="transmembrane region" description="Helical" evidence="1">
    <location>
        <begin position="168"/>
        <end position="188"/>
    </location>
</feature>
<feature type="transmembrane region" description="Helical" evidence="1">
    <location>
        <begin position="199"/>
        <end position="219"/>
    </location>
</feature>
<feature type="transmembrane region" description="Helical" evidence="1">
    <location>
        <begin position="236"/>
        <end position="256"/>
    </location>
</feature>
<feature type="transmembrane region" description="Helical" evidence="1">
    <location>
        <begin position="263"/>
        <end position="283"/>
    </location>
</feature>
<feature type="transmembrane region" description="Helical" evidence="1">
    <location>
        <begin position="288"/>
        <end position="308"/>
    </location>
</feature>
<feature type="transmembrane region" description="Helical" evidence="1">
    <location>
        <begin position="338"/>
        <end position="358"/>
    </location>
</feature>
<dbReference type="EC" id="2.7.8.13" evidence="1"/>
<dbReference type="EMBL" id="CP000606">
    <property type="protein sequence ID" value="ABO25322.1"/>
    <property type="molecule type" value="Genomic_DNA"/>
</dbReference>
<dbReference type="RefSeq" id="WP_011867252.1">
    <property type="nucleotide sequence ID" value="NC_009092.1"/>
</dbReference>
<dbReference type="SMR" id="A3QIM4"/>
<dbReference type="STRING" id="323850.Shew_3456"/>
<dbReference type="KEGG" id="slo:Shew_3456"/>
<dbReference type="eggNOG" id="COG0472">
    <property type="taxonomic scope" value="Bacteria"/>
</dbReference>
<dbReference type="HOGENOM" id="CLU_023982_0_0_6"/>
<dbReference type="OrthoDB" id="9805475at2"/>
<dbReference type="UniPathway" id="UPA00219"/>
<dbReference type="Proteomes" id="UP000001558">
    <property type="component" value="Chromosome"/>
</dbReference>
<dbReference type="GO" id="GO:0005886">
    <property type="term" value="C:plasma membrane"/>
    <property type="evidence" value="ECO:0007669"/>
    <property type="project" value="UniProtKB-SubCell"/>
</dbReference>
<dbReference type="GO" id="GO:0046872">
    <property type="term" value="F:metal ion binding"/>
    <property type="evidence" value="ECO:0007669"/>
    <property type="project" value="UniProtKB-KW"/>
</dbReference>
<dbReference type="GO" id="GO:0008963">
    <property type="term" value="F:phospho-N-acetylmuramoyl-pentapeptide-transferase activity"/>
    <property type="evidence" value="ECO:0007669"/>
    <property type="project" value="UniProtKB-UniRule"/>
</dbReference>
<dbReference type="GO" id="GO:0051992">
    <property type="term" value="F:UDP-N-acetylmuramoyl-L-alanyl-D-glutamyl-meso-2,6-diaminopimelyl-D-alanyl-D-alanine:undecaprenyl-phosphate transferase activity"/>
    <property type="evidence" value="ECO:0007669"/>
    <property type="project" value="RHEA"/>
</dbReference>
<dbReference type="GO" id="GO:0051301">
    <property type="term" value="P:cell division"/>
    <property type="evidence" value="ECO:0007669"/>
    <property type="project" value="UniProtKB-KW"/>
</dbReference>
<dbReference type="GO" id="GO:0071555">
    <property type="term" value="P:cell wall organization"/>
    <property type="evidence" value="ECO:0007669"/>
    <property type="project" value="UniProtKB-KW"/>
</dbReference>
<dbReference type="GO" id="GO:0009252">
    <property type="term" value="P:peptidoglycan biosynthetic process"/>
    <property type="evidence" value="ECO:0007669"/>
    <property type="project" value="UniProtKB-UniRule"/>
</dbReference>
<dbReference type="GO" id="GO:0008360">
    <property type="term" value="P:regulation of cell shape"/>
    <property type="evidence" value="ECO:0007669"/>
    <property type="project" value="UniProtKB-KW"/>
</dbReference>
<dbReference type="CDD" id="cd06852">
    <property type="entry name" value="GT_MraY"/>
    <property type="match status" value="1"/>
</dbReference>
<dbReference type="HAMAP" id="MF_00038">
    <property type="entry name" value="MraY"/>
    <property type="match status" value="1"/>
</dbReference>
<dbReference type="InterPro" id="IPR000715">
    <property type="entry name" value="Glycosyl_transferase_4"/>
</dbReference>
<dbReference type="InterPro" id="IPR003524">
    <property type="entry name" value="PNAcMuramoyl-5peptid_Trfase"/>
</dbReference>
<dbReference type="InterPro" id="IPR018480">
    <property type="entry name" value="PNAcMuramoyl-5peptid_Trfase_CS"/>
</dbReference>
<dbReference type="NCBIfam" id="TIGR00445">
    <property type="entry name" value="mraY"/>
    <property type="match status" value="1"/>
</dbReference>
<dbReference type="PANTHER" id="PTHR22926">
    <property type="entry name" value="PHOSPHO-N-ACETYLMURAMOYL-PENTAPEPTIDE-TRANSFERASE"/>
    <property type="match status" value="1"/>
</dbReference>
<dbReference type="PANTHER" id="PTHR22926:SF5">
    <property type="entry name" value="PHOSPHO-N-ACETYLMURAMOYL-PENTAPEPTIDE-TRANSFERASE HOMOLOG"/>
    <property type="match status" value="1"/>
</dbReference>
<dbReference type="Pfam" id="PF00953">
    <property type="entry name" value="Glycos_transf_4"/>
    <property type="match status" value="1"/>
</dbReference>
<dbReference type="Pfam" id="PF10555">
    <property type="entry name" value="MraY_sig1"/>
    <property type="match status" value="1"/>
</dbReference>
<dbReference type="PROSITE" id="PS01347">
    <property type="entry name" value="MRAY_1"/>
    <property type="match status" value="1"/>
</dbReference>
<dbReference type="PROSITE" id="PS01348">
    <property type="entry name" value="MRAY_2"/>
    <property type="match status" value="1"/>
</dbReference>
<sequence length="360" mass="39798">MLVYLAEYLTQFYTGFNVFSYVTFRAILGLLTAMVFSLWWGPKMIERLQLLQIGQVVRNEGPESHFAKRGTPTMGGLLILAGVFISVLLWGDLGSRYVWVMLFVLGAFGLIGFIDDYRKVVRKDTKGLIARWKYILQSLAALAIAFYLYASAGSEGETQLVLPFFKDVMPQLGAFFILLAYFTIVGSSNAVNLTDGLDGLAIMPTVMVAAAFALIAYLSGHVQFANYLHIPYLPGSGELVIVCTAIVGAGLGFLWFNTYPAQVFMGDVGSLSLGAALGTIAVLVRQEILLVIMGGVFVMETVSVILQVGSYKLRGQRIFRMAPIHHHYELKGWPEPRVIVRFWIISLFLVLLGLATLKLR</sequence>
<proteinExistence type="inferred from homology"/>
<protein>
    <recommendedName>
        <fullName evidence="1">Phospho-N-acetylmuramoyl-pentapeptide-transferase</fullName>
        <ecNumber evidence="1">2.7.8.13</ecNumber>
    </recommendedName>
    <alternativeName>
        <fullName evidence="1">UDP-MurNAc-pentapeptide phosphotransferase</fullName>
    </alternativeName>
</protein>
<accession>A3QIM4</accession>